<proteinExistence type="evidence at protein level"/>
<keyword id="KW-0020">Allergen</keyword>
<keyword id="KW-0903">Direct protein sequencing</keyword>
<keyword id="KW-0446">Lipid-binding</keyword>
<keyword id="KW-0813">Transport</keyword>
<protein>
    <recommendedName>
        <fullName>Non-specific lipid-transfer protein</fullName>
        <shortName>LTP</shortName>
    </recommendedName>
    <alternativeName>
        <fullName>Pollen allergen Art v 3</fullName>
    </alternativeName>
    <allergenName>Art v 3</allergenName>
</protein>
<dbReference type="SMR" id="P0C088"/>
<dbReference type="Allergome" id="3104">
    <property type="allergen name" value="Art v 3.0101"/>
</dbReference>
<dbReference type="Allergome" id="59">
    <property type="allergen name" value="Art v 3"/>
</dbReference>
<dbReference type="GO" id="GO:0008289">
    <property type="term" value="F:lipid binding"/>
    <property type="evidence" value="ECO:0007669"/>
    <property type="project" value="UniProtKB-KW"/>
</dbReference>
<dbReference type="GO" id="GO:0006869">
    <property type="term" value="P:lipid transport"/>
    <property type="evidence" value="ECO:0007669"/>
    <property type="project" value="InterPro"/>
</dbReference>
<dbReference type="Gene3D" id="1.10.110.10">
    <property type="entry name" value="Plant lipid-transfer and hydrophobic proteins"/>
    <property type="match status" value="1"/>
</dbReference>
<dbReference type="InterPro" id="IPR036312">
    <property type="entry name" value="Bifun_inhib/LTP/seed_sf"/>
</dbReference>
<dbReference type="InterPro" id="IPR016140">
    <property type="entry name" value="Bifunc_inhib/LTP/seed_store"/>
</dbReference>
<dbReference type="InterPro" id="IPR000528">
    <property type="entry name" value="Plant_nsLTP"/>
</dbReference>
<dbReference type="Pfam" id="PF00234">
    <property type="entry name" value="Tryp_alpha_amyl"/>
    <property type="match status" value="1"/>
</dbReference>
<dbReference type="PRINTS" id="PR00382">
    <property type="entry name" value="LIPIDTRNSFER"/>
</dbReference>
<dbReference type="SUPFAM" id="SSF47699">
    <property type="entry name" value="Bifunctional inhibitor/lipid-transfer protein/seed storage 2S albumin"/>
    <property type="match status" value="1"/>
</dbReference>
<reference key="1">
    <citation type="journal article" date="2000" name="Clin. Exp. Allergy">
        <title>Lipid-transfer proteins as potential plant panallergens: cross-reactivity among proteins of Artemisia pollen, Castanea nut and Rosaceae fruits, with different IgE-binding capacities.</title>
        <authorList>
            <person name="Diaz-Perales A."/>
            <person name="Lombardero M."/>
            <person name="Sanchez-Monge R."/>
            <person name="Garcia-Selles F.J."/>
            <person name="Pernas M."/>
            <person name="Fernandez-Rivas M."/>
            <person name="Barber D."/>
            <person name="Salcedo G."/>
        </authorList>
    </citation>
    <scope>PROTEIN SEQUENCE</scope>
    <scope>MASS SPECTROMETRY</scope>
    <source>
        <tissue>Pollen</tissue>
    </source>
</reference>
<evidence type="ECO:0000250" key="1"/>
<evidence type="ECO:0000269" key="2">
    <source>
    </source>
</evidence>
<evidence type="ECO:0000305" key="3"/>
<sequence length="37" mass="3757">ALTCSDVSNKISPCLSYLKQGGEVPADCCAGVKGLND</sequence>
<name>NLTP_ARTVU</name>
<organism>
    <name type="scientific">Artemisia vulgaris</name>
    <name type="common">Mugwort</name>
    <dbReference type="NCBI Taxonomy" id="4220"/>
    <lineage>
        <taxon>Eukaryota</taxon>
        <taxon>Viridiplantae</taxon>
        <taxon>Streptophyta</taxon>
        <taxon>Embryophyta</taxon>
        <taxon>Tracheophyta</taxon>
        <taxon>Spermatophyta</taxon>
        <taxon>Magnoliopsida</taxon>
        <taxon>eudicotyledons</taxon>
        <taxon>Gunneridae</taxon>
        <taxon>Pentapetalae</taxon>
        <taxon>asterids</taxon>
        <taxon>campanulids</taxon>
        <taxon>Asterales</taxon>
        <taxon>Asteraceae</taxon>
        <taxon>Asteroideae</taxon>
        <taxon>Anthemideae</taxon>
        <taxon>Artemisiinae</taxon>
        <taxon>Artemisia</taxon>
    </lineage>
</organism>
<accession>P0C088</accession>
<comment type="function">
    <text evidence="1">Plant non-specific lipid-transfer proteins transfer phospholipids as well as galactolipids across membranes. May play a role in wax or cutin deposition in the cell walls of expanding epidermal cells and certain secretory tissues (By similarity).</text>
</comment>
<comment type="mass spectrometry" mass="9736.0" method="MALDI" evidence="2"/>
<comment type="allergen">
    <text>Causes an allergic reaction in human.</text>
</comment>
<comment type="similarity">
    <text evidence="3">Belongs to the plant LTP family.</text>
</comment>
<feature type="chain" id="PRO_0000153869" description="Non-specific lipid-transfer protein">
    <location>
        <begin position="1"/>
        <end position="37" status="greater than"/>
    </location>
</feature>
<feature type="non-terminal residue">
    <location>
        <position position="37"/>
    </location>
</feature>